<reference key="1">
    <citation type="journal article" date="1986" name="EMBO J.">
        <title>The complete nucleotide sequence of the tobacco chloroplast genome: its gene organization and expression.</title>
        <authorList>
            <person name="Shinozaki K."/>
            <person name="Ohme M."/>
            <person name="Tanaka M."/>
            <person name="Wakasugi T."/>
            <person name="Hayashida N."/>
            <person name="Matsubayashi T."/>
            <person name="Zaita N."/>
            <person name="Chunwongse J."/>
            <person name="Obokata J."/>
            <person name="Yamaguchi-Shinozaki K."/>
            <person name="Ohto C."/>
            <person name="Torazawa K."/>
            <person name="Meng B.-Y."/>
            <person name="Sugita M."/>
            <person name="Deno H."/>
            <person name="Kamogashira T."/>
            <person name="Yamada K."/>
            <person name="Kusuda J."/>
            <person name="Takaiwa F."/>
            <person name="Kato A."/>
            <person name="Tohdoh N."/>
            <person name="Shimada H."/>
            <person name="Sugiura M."/>
        </authorList>
    </citation>
    <scope>NUCLEOTIDE SEQUENCE [LARGE SCALE GENOMIC DNA]</scope>
    <source>
        <strain>cv. Bright Yellow 4</strain>
    </source>
</reference>
<dbReference type="EMBL" id="Z00044">
    <property type="protein sequence ID" value="CAA77414.2"/>
    <property type="status" value="ALT_INIT"/>
    <property type="molecule type" value="Genomic_DNA"/>
</dbReference>
<dbReference type="PIR" id="A03473">
    <property type="entry name" value="F2NT44"/>
</dbReference>
<dbReference type="RefSeq" id="NP_054492.2">
    <property type="nucleotide sequence ID" value="NC_001879.2"/>
</dbReference>
<dbReference type="SMR" id="P06413"/>
<dbReference type="GeneID" id="800516"/>
<dbReference type="KEGG" id="nta:800516"/>
<dbReference type="OrthoDB" id="1273448at2759"/>
<dbReference type="Proteomes" id="UP000084051">
    <property type="component" value="Unplaced"/>
</dbReference>
<dbReference type="GO" id="GO:0009535">
    <property type="term" value="C:chloroplast thylakoid membrane"/>
    <property type="evidence" value="ECO:0007669"/>
    <property type="project" value="UniProtKB-SubCell"/>
</dbReference>
<dbReference type="GO" id="GO:0009523">
    <property type="term" value="C:photosystem II"/>
    <property type="evidence" value="ECO:0007669"/>
    <property type="project" value="UniProtKB-KW"/>
</dbReference>
<dbReference type="GO" id="GO:0016168">
    <property type="term" value="F:chlorophyll binding"/>
    <property type="evidence" value="ECO:0007669"/>
    <property type="project" value="UniProtKB-UniRule"/>
</dbReference>
<dbReference type="GO" id="GO:0045156">
    <property type="term" value="F:electron transporter, transferring electrons within the cyclic electron transport pathway of photosynthesis activity"/>
    <property type="evidence" value="ECO:0007669"/>
    <property type="project" value="InterPro"/>
</dbReference>
<dbReference type="GO" id="GO:0046872">
    <property type="term" value="F:metal ion binding"/>
    <property type="evidence" value="ECO:0007669"/>
    <property type="project" value="UniProtKB-KW"/>
</dbReference>
<dbReference type="GO" id="GO:0009772">
    <property type="term" value="P:photosynthetic electron transport in photosystem II"/>
    <property type="evidence" value="ECO:0007669"/>
    <property type="project" value="InterPro"/>
</dbReference>
<dbReference type="FunFam" id="1.10.10.670:FF:000001">
    <property type="entry name" value="Photosystem II CP43 reaction center protein"/>
    <property type="match status" value="1"/>
</dbReference>
<dbReference type="Gene3D" id="1.10.10.670">
    <property type="entry name" value="photosystem ii from thermosynechococcus elongatus"/>
    <property type="match status" value="1"/>
</dbReference>
<dbReference type="HAMAP" id="MF_01496">
    <property type="entry name" value="PSII_PsbC_CP43"/>
    <property type="match status" value="1"/>
</dbReference>
<dbReference type="InterPro" id="IPR000932">
    <property type="entry name" value="PS_antenna-like"/>
</dbReference>
<dbReference type="InterPro" id="IPR036001">
    <property type="entry name" value="PS_II_antenna-like_sf"/>
</dbReference>
<dbReference type="InterPro" id="IPR005869">
    <property type="entry name" value="PSII_PsbC"/>
</dbReference>
<dbReference type="InterPro" id="IPR044900">
    <property type="entry name" value="PSII_PsbC_sf"/>
</dbReference>
<dbReference type="NCBIfam" id="TIGR01153">
    <property type="entry name" value="psbC"/>
    <property type="match status" value="1"/>
</dbReference>
<dbReference type="Pfam" id="PF00421">
    <property type="entry name" value="PSII"/>
    <property type="match status" value="1"/>
</dbReference>
<dbReference type="SUPFAM" id="SSF161077">
    <property type="entry name" value="Photosystem II antenna protein-like"/>
    <property type="match status" value="1"/>
</dbReference>
<organism>
    <name type="scientific">Nicotiana tabacum</name>
    <name type="common">Common tobacco</name>
    <dbReference type="NCBI Taxonomy" id="4097"/>
    <lineage>
        <taxon>Eukaryota</taxon>
        <taxon>Viridiplantae</taxon>
        <taxon>Streptophyta</taxon>
        <taxon>Embryophyta</taxon>
        <taxon>Tracheophyta</taxon>
        <taxon>Spermatophyta</taxon>
        <taxon>Magnoliopsida</taxon>
        <taxon>eudicotyledons</taxon>
        <taxon>Gunneridae</taxon>
        <taxon>Pentapetalae</taxon>
        <taxon>asterids</taxon>
        <taxon>lamiids</taxon>
        <taxon>Solanales</taxon>
        <taxon>Solanaceae</taxon>
        <taxon>Nicotianoideae</taxon>
        <taxon>Nicotianeae</taxon>
        <taxon>Nicotiana</taxon>
    </lineage>
</organism>
<name>PSBC_TOBAC</name>
<evidence type="ECO:0000255" key="1">
    <source>
        <dbReference type="HAMAP-Rule" id="MF_01496"/>
    </source>
</evidence>
<evidence type="ECO:0000305" key="2"/>
<gene>
    <name evidence="1" type="primary">psbC</name>
</gene>
<keyword id="KW-0007">Acetylation</keyword>
<keyword id="KW-0148">Chlorophyll</keyword>
<keyword id="KW-0150">Chloroplast</keyword>
<keyword id="KW-0157">Chromophore</keyword>
<keyword id="KW-0464">Manganese</keyword>
<keyword id="KW-0472">Membrane</keyword>
<keyword id="KW-0479">Metal-binding</keyword>
<keyword id="KW-0597">Phosphoprotein</keyword>
<keyword id="KW-0602">Photosynthesis</keyword>
<keyword id="KW-0604">Photosystem II</keyword>
<keyword id="KW-0934">Plastid</keyword>
<keyword id="KW-1185">Reference proteome</keyword>
<keyword id="KW-0793">Thylakoid</keyword>
<keyword id="KW-0812">Transmembrane</keyword>
<keyword id="KW-1133">Transmembrane helix</keyword>
<protein>
    <recommendedName>
        <fullName evidence="1">Photosystem II CP43 reaction center protein</fullName>
    </recommendedName>
    <alternativeName>
        <fullName evidence="1">PSII 43 kDa protein</fullName>
    </alternativeName>
    <alternativeName>
        <fullName evidence="1">Protein CP-43</fullName>
    </alternativeName>
</protein>
<geneLocation type="chloroplast"/>
<sequence length="473" mass="51910">MKTLYSLRRFYHVETLFNGTLALAGRDQETTGFAWWAGNARLINLSGKLLGAHVAHAGLIVFWAGAMNLFEVAHFVPEKPMYEQGLILLPHLATLGWGVGPGGEVIDTFPYFVSGVLHLISSAVLGFGGIYHALLGPETLEESFPFFGYVWKDRNKMTTILGIHLILLGLGAFLLVFKALYFGGVYDTWAPGGGDVRKITNLTLSPSIIFGYLLKSPFGGEGWIVSVDDLEDIIGGHVWLGSICILGGIWHILTKPFAWARRALVWSGEAYLSYSLGALSVFGFIACCFVWFNNTAYPSEFYGPTGPEASQAQAFTFLVRDQRLGANVGSAQGPTGLGKYLMRSPTGEVIFGGETMRFWDLRAPWLEPLRGPNGLDLSRLKKDIQPWQERRSAEYMTHAPLGSLNSVGGVATEINAVNYVSPRSWLATSHFVLGFFFFVGHLWHAGRARAAAAGFEKGIDRDFEPVLSMTPLN</sequence>
<accession>P06413</accession>
<proteinExistence type="inferred from homology"/>
<comment type="function">
    <text evidence="1">One of the components of the core complex of photosystem II (PSII). It binds chlorophyll and helps catalyze the primary light-induced photochemical processes of PSII. PSII is a light-driven water:plastoquinone oxidoreductase, using light energy to abstract electrons from H(2)O, generating O(2) and a proton gradient subsequently used for ATP formation.</text>
</comment>
<comment type="cofactor">
    <text evidence="1">Binds multiple chlorophylls and provides some of the ligands for the Ca-4Mn-5O cluster of the oxygen-evolving complex. It may also provide a ligand for a Cl- that is required for oxygen evolution. PSII binds additional chlorophylls, carotenoids and specific lipids.</text>
</comment>
<comment type="subunit">
    <text evidence="1">PSII is composed of 1 copy each of membrane proteins PsbA, PsbB, PsbC, PsbD, PsbE, PsbF, PsbH, PsbI, PsbJ, PsbK, PsbL, PsbM, PsbT, PsbX, PsbY, PsbZ, Psb30/Ycf12, at least 3 peripheral proteins of the oxygen-evolving complex and a large number of cofactors. It forms dimeric complexes.</text>
</comment>
<comment type="subcellular location">
    <subcellularLocation>
        <location evidence="1">Plastid</location>
        <location evidence="1">Chloroplast thylakoid membrane</location>
        <topology evidence="1">Multi-pass membrane protein</topology>
    </subcellularLocation>
</comment>
<comment type="similarity">
    <text evidence="1">Belongs to the PsbB/PsbC family. PsbC subfamily.</text>
</comment>
<comment type="sequence caution" evidence="2">
    <conflict type="erroneous initiation">
        <sequence resource="EMBL-CDS" id="CAA77414"/>
    </conflict>
    <text>Truncated N-terminus.</text>
</comment>
<feature type="propeptide" id="PRO_0000431172" evidence="1">
    <location>
        <begin position="1"/>
        <end position="14"/>
    </location>
</feature>
<feature type="chain" id="PRO_0000077528" description="Photosystem II CP43 reaction center protein" evidence="1">
    <location>
        <begin position="15"/>
        <end position="473"/>
    </location>
</feature>
<feature type="transmembrane region" description="Helical" evidence="1">
    <location>
        <begin position="69"/>
        <end position="93"/>
    </location>
</feature>
<feature type="transmembrane region" description="Helical" evidence="1">
    <location>
        <begin position="134"/>
        <end position="155"/>
    </location>
</feature>
<feature type="transmembrane region" description="Helical" evidence="1">
    <location>
        <begin position="178"/>
        <end position="200"/>
    </location>
</feature>
<feature type="transmembrane region" description="Helical" evidence="1">
    <location>
        <begin position="255"/>
        <end position="275"/>
    </location>
</feature>
<feature type="transmembrane region" description="Helical" evidence="1">
    <location>
        <begin position="291"/>
        <end position="312"/>
    </location>
</feature>
<feature type="transmembrane region" description="Helical" evidence="1">
    <location>
        <begin position="447"/>
        <end position="471"/>
    </location>
</feature>
<feature type="binding site" evidence="1">
    <location>
        <position position="367"/>
    </location>
    <ligand>
        <name>[CaMn4O5] cluster</name>
        <dbReference type="ChEBI" id="CHEBI:189552"/>
    </ligand>
</feature>
<feature type="modified residue" description="N-acetylthreonine" evidence="1">
    <location>
        <position position="15"/>
    </location>
</feature>
<feature type="modified residue" description="Phosphothreonine" evidence="1">
    <location>
        <position position="15"/>
    </location>
</feature>